<proteinExistence type="inferred from homology"/>
<comment type="function">
    <text evidence="2">Component of the EKC/KEOPS complex that is required for the formation of a threonylcarbamoyl group on adenosine at position 37 (t(6)A37) in tRNAs that read codons beginning with adenine. The complex is probably involved in the transfer of the threonylcarbamoyl moiety of threonylcarbamoyl-AMP (TC-AMP) to the N6 group of A37. Bud32 has ATPase activity in the context of the EKC/KEOPS complex and likely plays a supporting role to the catalytic subunit osgep (By similarity).</text>
</comment>
<comment type="catalytic activity">
    <reaction evidence="2">
        <text>L-seryl-[protein] + ATP = O-phospho-L-seryl-[protein] + ADP + H(+)</text>
        <dbReference type="Rhea" id="RHEA:17989"/>
        <dbReference type="Rhea" id="RHEA-COMP:9863"/>
        <dbReference type="Rhea" id="RHEA-COMP:11604"/>
        <dbReference type="ChEBI" id="CHEBI:15378"/>
        <dbReference type="ChEBI" id="CHEBI:29999"/>
        <dbReference type="ChEBI" id="CHEBI:30616"/>
        <dbReference type="ChEBI" id="CHEBI:83421"/>
        <dbReference type="ChEBI" id="CHEBI:456216"/>
        <dbReference type="EC" id="2.7.11.1"/>
    </reaction>
</comment>
<comment type="catalytic activity">
    <reaction evidence="2">
        <text>L-threonyl-[protein] + ATP = O-phospho-L-threonyl-[protein] + ADP + H(+)</text>
        <dbReference type="Rhea" id="RHEA:46608"/>
        <dbReference type="Rhea" id="RHEA-COMP:11060"/>
        <dbReference type="Rhea" id="RHEA-COMP:11605"/>
        <dbReference type="ChEBI" id="CHEBI:15378"/>
        <dbReference type="ChEBI" id="CHEBI:30013"/>
        <dbReference type="ChEBI" id="CHEBI:30616"/>
        <dbReference type="ChEBI" id="CHEBI:61977"/>
        <dbReference type="ChEBI" id="CHEBI:456216"/>
        <dbReference type="EC" id="2.7.11.1"/>
    </reaction>
</comment>
<comment type="subunit">
    <text evidence="2">Component of the EKC/KEOPS complex; the whole complex dimerizes.</text>
</comment>
<comment type="subcellular location">
    <subcellularLocation>
        <location evidence="2">Nucleus</location>
    </subcellularLocation>
</comment>
<comment type="miscellaneous">
    <text evidence="1 3">This protein is considered an atypical serine/threonine kinase, because it lacks the conventional structural elements necessary for the substrate recognition as well as a lysine residue that in all other serine/threonine kinases participates in the catalytic event. Bud32 has protein kinase activity in vitro, but in the context of the EKC/KEOPS complex, the catalytic subunit osgep switches the activity of bud32 from kinase into ATPase (By similarity).</text>
</comment>
<comment type="similarity">
    <text evidence="7">Belongs to the protein kinase superfamily. BUD32 family.</text>
</comment>
<accession>Q54W07</accession>
<gene>
    <name type="primary">bud32</name>
    <name type="ORF">DDB_G0279977</name>
</gene>
<name>BUD32_DICDI</name>
<dbReference type="EC" id="3.6.-.-" evidence="3"/>
<dbReference type="EC" id="2.7.11.1" evidence="2"/>
<dbReference type="EMBL" id="AAFI02000035">
    <property type="protein sequence ID" value="EAL67460.1"/>
    <property type="molecule type" value="Genomic_DNA"/>
</dbReference>
<dbReference type="RefSeq" id="XP_641443.1">
    <property type="nucleotide sequence ID" value="XM_636351.1"/>
</dbReference>
<dbReference type="SMR" id="Q54W07"/>
<dbReference type="FunCoup" id="Q54W07">
    <property type="interactions" value="517"/>
</dbReference>
<dbReference type="STRING" id="44689.Q54W07"/>
<dbReference type="PaxDb" id="44689-DDB0216402"/>
<dbReference type="EnsemblProtists" id="EAL67460">
    <property type="protein sequence ID" value="EAL67460"/>
    <property type="gene ID" value="DDB_G0279977"/>
</dbReference>
<dbReference type="GeneID" id="8622328"/>
<dbReference type="KEGG" id="ddi:DDB_G0279977"/>
<dbReference type="dictyBase" id="DDB_G0279977">
    <property type="gene designation" value="bud32"/>
</dbReference>
<dbReference type="VEuPathDB" id="AmoebaDB:DDB_G0279977"/>
<dbReference type="eggNOG" id="KOG3087">
    <property type="taxonomic scope" value="Eukaryota"/>
</dbReference>
<dbReference type="HOGENOM" id="CLU_063953_0_0_1"/>
<dbReference type="InParanoid" id="Q54W07"/>
<dbReference type="OMA" id="HKLYMEY"/>
<dbReference type="PhylomeDB" id="Q54W07"/>
<dbReference type="PRO" id="PR:Q54W07"/>
<dbReference type="Proteomes" id="UP000002195">
    <property type="component" value="Chromosome 3"/>
</dbReference>
<dbReference type="GO" id="GO:0005829">
    <property type="term" value="C:cytosol"/>
    <property type="evidence" value="ECO:0000318"/>
    <property type="project" value="GO_Central"/>
</dbReference>
<dbReference type="GO" id="GO:0000408">
    <property type="term" value="C:EKC/KEOPS complex"/>
    <property type="evidence" value="ECO:0000318"/>
    <property type="project" value="GO_Central"/>
</dbReference>
<dbReference type="GO" id="GO:0005634">
    <property type="term" value="C:nucleus"/>
    <property type="evidence" value="ECO:0000318"/>
    <property type="project" value="GO_Central"/>
</dbReference>
<dbReference type="GO" id="GO:0005524">
    <property type="term" value="F:ATP binding"/>
    <property type="evidence" value="ECO:0007669"/>
    <property type="project" value="UniProtKB-KW"/>
</dbReference>
<dbReference type="GO" id="GO:0016787">
    <property type="term" value="F:hydrolase activity"/>
    <property type="evidence" value="ECO:0007669"/>
    <property type="project" value="UniProtKB-KW"/>
</dbReference>
<dbReference type="GO" id="GO:0106310">
    <property type="term" value="F:protein serine kinase activity"/>
    <property type="evidence" value="ECO:0007669"/>
    <property type="project" value="RHEA"/>
</dbReference>
<dbReference type="GO" id="GO:0004674">
    <property type="term" value="F:protein serine/threonine kinase activity"/>
    <property type="evidence" value="ECO:0000250"/>
    <property type="project" value="dictyBase"/>
</dbReference>
<dbReference type="GO" id="GO:0006468">
    <property type="term" value="P:protein phosphorylation"/>
    <property type="evidence" value="ECO:0000250"/>
    <property type="project" value="dictyBase"/>
</dbReference>
<dbReference type="GO" id="GO:0008033">
    <property type="term" value="P:tRNA processing"/>
    <property type="evidence" value="ECO:0007669"/>
    <property type="project" value="UniProtKB-KW"/>
</dbReference>
<dbReference type="GO" id="GO:0070525">
    <property type="term" value="P:tRNA threonylcarbamoyladenosine metabolic process"/>
    <property type="evidence" value="ECO:0000318"/>
    <property type="project" value="GO_Central"/>
</dbReference>
<dbReference type="FunFam" id="3.30.200.20:FF:000201">
    <property type="entry name" value="TP53-regulating kinase isoform X1"/>
    <property type="match status" value="1"/>
</dbReference>
<dbReference type="FunFam" id="1.10.510.10:FF:000323">
    <property type="entry name" value="TP53-regulating kinase, putative"/>
    <property type="match status" value="1"/>
</dbReference>
<dbReference type="Gene3D" id="3.30.200.20">
    <property type="entry name" value="Phosphorylase Kinase, domain 1"/>
    <property type="match status" value="1"/>
</dbReference>
<dbReference type="Gene3D" id="1.10.510.10">
    <property type="entry name" value="Transferase(Phosphotransferase) domain 1"/>
    <property type="match status" value="1"/>
</dbReference>
<dbReference type="InterPro" id="IPR022495">
    <property type="entry name" value="Bud32"/>
</dbReference>
<dbReference type="InterPro" id="IPR011009">
    <property type="entry name" value="Kinase-like_dom_sf"/>
</dbReference>
<dbReference type="InterPro" id="IPR000719">
    <property type="entry name" value="Prot_kinase_dom"/>
</dbReference>
<dbReference type="InterPro" id="IPR008266">
    <property type="entry name" value="Tyr_kinase_AS"/>
</dbReference>
<dbReference type="NCBIfam" id="TIGR03724">
    <property type="entry name" value="arch_bud32"/>
    <property type="match status" value="1"/>
</dbReference>
<dbReference type="PANTHER" id="PTHR12209:SF0">
    <property type="entry name" value="EKC_KEOPS COMPLEX SUBUNIT TP53RK"/>
    <property type="match status" value="1"/>
</dbReference>
<dbReference type="PANTHER" id="PTHR12209">
    <property type="entry name" value="NON-SPECIFIC SERINE/THREONINE PROTEIN KINASE"/>
    <property type="match status" value="1"/>
</dbReference>
<dbReference type="Pfam" id="PF00069">
    <property type="entry name" value="Pkinase"/>
    <property type="match status" value="1"/>
</dbReference>
<dbReference type="SMART" id="SM00220">
    <property type="entry name" value="S_TKc"/>
    <property type="match status" value="1"/>
</dbReference>
<dbReference type="SUPFAM" id="SSF56112">
    <property type="entry name" value="Protein kinase-like (PK-like)"/>
    <property type="match status" value="1"/>
</dbReference>
<dbReference type="PROSITE" id="PS50011">
    <property type="entry name" value="PROTEIN_KINASE_DOM"/>
    <property type="match status" value="1"/>
</dbReference>
<dbReference type="PROSITE" id="PS00109">
    <property type="entry name" value="PROTEIN_KINASE_TYR"/>
    <property type="match status" value="1"/>
</dbReference>
<reference key="1">
    <citation type="journal article" date="2005" name="Nature">
        <title>The genome of the social amoeba Dictyostelium discoideum.</title>
        <authorList>
            <person name="Eichinger L."/>
            <person name="Pachebat J.A."/>
            <person name="Gloeckner G."/>
            <person name="Rajandream M.A."/>
            <person name="Sucgang R."/>
            <person name="Berriman M."/>
            <person name="Song J."/>
            <person name="Olsen R."/>
            <person name="Szafranski K."/>
            <person name="Xu Q."/>
            <person name="Tunggal B."/>
            <person name="Kummerfeld S."/>
            <person name="Madera M."/>
            <person name="Konfortov B.A."/>
            <person name="Rivero F."/>
            <person name="Bankier A.T."/>
            <person name="Lehmann R."/>
            <person name="Hamlin N."/>
            <person name="Davies R."/>
            <person name="Gaudet P."/>
            <person name="Fey P."/>
            <person name="Pilcher K."/>
            <person name="Chen G."/>
            <person name="Saunders D."/>
            <person name="Sodergren E.J."/>
            <person name="Davis P."/>
            <person name="Kerhornou A."/>
            <person name="Nie X."/>
            <person name="Hall N."/>
            <person name="Anjard C."/>
            <person name="Hemphill L."/>
            <person name="Bason N."/>
            <person name="Farbrother P."/>
            <person name="Desany B."/>
            <person name="Just E."/>
            <person name="Morio T."/>
            <person name="Rost R."/>
            <person name="Churcher C.M."/>
            <person name="Cooper J."/>
            <person name="Haydock S."/>
            <person name="van Driessche N."/>
            <person name="Cronin A."/>
            <person name="Goodhead I."/>
            <person name="Muzny D.M."/>
            <person name="Mourier T."/>
            <person name="Pain A."/>
            <person name="Lu M."/>
            <person name="Harper D."/>
            <person name="Lindsay R."/>
            <person name="Hauser H."/>
            <person name="James K.D."/>
            <person name="Quiles M."/>
            <person name="Madan Babu M."/>
            <person name="Saito T."/>
            <person name="Buchrieser C."/>
            <person name="Wardroper A."/>
            <person name="Felder M."/>
            <person name="Thangavelu M."/>
            <person name="Johnson D."/>
            <person name="Knights A."/>
            <person name="Loulseged H."/>
            <person name="Mungall K.L."/>
            <person name="Oliver K."/>
            <person name="Price C."/>
            <person name="Quail M.A."/>
            <person name="Urushihara H."/>
            <person name="Hernandez J."/>
            <person name="Rabbinowitsch E."/>
            <person name="Steffen D."/>
            <person name="Sanders M."/>
            <person name="Ma J."/>
            <person name="Kohara Y."/>
            <person name="Sharp S."/>
            <person name="Simmonds M.N."/>
            <person name="Spiegler S."/>
            <person name="Tivey A."/>
            <person name="Sugano S."/>
            <person name="White B."/>
            <person name="Walker D."/>
            <person name="Woodward J.R."/>
            <person name="Winckler T."/>
            <person name="Tanaka Y."/>
            <person name="Shaulsky G."/>
            <person name="Schleicher M."/>
            <person name="Weinstock G.M."/>
            <person name="Rosenthal A."/>
            <person name="Cox E.C."/>
            <person name="Chisholm R.L."/>
            <person name="Gibbs R.A."/>
            <person name="Loomis W.F."/>
            <person name="Platzer M."/>
            <person name="Kay R.R."/>
            <person name="Williams J.G."/>
            <person name="Dear P.H."/>
            <person name="Noegel A.A."/>
            <person name="Barrell B.G."/>
            <person name="Kuspa A."/>
        </authorList>
    </citation>
    <scope>NUCLEOTIDE SEQUENCE [LARGE SCALE GENOMIC DNA]</scope>
    <source>
        <strain>AX4</strain>
    </source>
</reference>
<sequence>MDANECSNSENSATTTIPKSASPSTTISTKVVKLDEIGILISQGAEAKTYETDLYGLKCIVKERFSKAYRHPILDQKISSKRILQEVRSLNKCKKKGIQVPSLYLVDIGNNRIYMEFIKGETVKHYLYKNQESTQHQNQIESIMKELGNQIGIIHEMNVIHGDLTTSNMLLRESTNELVFIDFGLSYTSNSVEDKAVDLYVLERAFISTHPNSEQLFQTILSNYELTSSNSKIVIQKLNQVRLRGRKKTCFG</sequence>
<protein>
    <recommendedName>
        <fullName>EKC/KEOPS complex subunit bud32</fullName>
        <ecNumber evidence="3">3.6.-.-</ecNumber>
    </recommendedName>
    <alternativeName>
        <fullName>Atypical serine/threonine protein kinase bud32</fullName>
        <ecNumber evidence="2">2.7.11.1</ecNumber>
    </alternativeName>
</protein>
<organism>
    <name type="scientific">Dictyostelium discoideum</name>
    <name type="common">Social amoeba</name>
    <dbReference type="NCBI Taxonomy" id="44689"/>
    <lineage>
        <taxon>Eukaryota</taxon>
        <taxon>Amoebozoa</taxon>
        <taxon>Evosea</taxon>
        <taxon>Eumycetozoa</taxon>
        <taxon>Dictyostelia</taxon>
        <taxon>Dictyosteliales</taxon>
        <taxon>Dictyosteliaceae</taxon>
        <taxon>Dictyostelium</taxon>
    </lineage>
</organism>
<evidence type="ECO:0000250" key="1">
    <source>
        <dbReference type="UniProtKB" id="P53323"/>
    </source>
</evidence>
<evidence type="ECO:0000250" key="2">
    <source>
        <dbReference type="UniProtKB" id="Q96S44"/>
    </source>
</evidence>
<evidence type="ECO:0000250" key="3">
    <source>
        <dbReference type="UniProtKB" id="Q9UYB9"/>
    </source>
</evidence>
<evidence type="ECO:0000255" key="4">
    <source>
        <dbReference type="PROSITE-ProRule" id="PRU00159"/>
    </source>
</evidence>
<evidence type="ECO:0000255" key="5">
    <source>
        <dbReference type="PROSITE-ProRule" id="PRU10028"/>
    </source>
</evidence>
<evidence type="ECO:0000256" key="6">
    <source>
        <dbReference type="SAM" id="MobiDB-lite"/>
    </source>
</evidence>
<evidence type="ECO:0000305" key="7"/>
<feature type="chain" id="PRO_0000362004" description="EKC/KEOPS complex subunit bud32">
    <location>
        <begin position="1"/>
        <end position="252"/>
    </location>
</feature>
<feature type="domain" description="Protein kinase" evidence="4">
    <location>
        <begin position="35"/>
        <end position="252"/>
    </location>
</feature>
<feature type="region of interest" description="Disordered" evidence="6">
    <location>
        <begin position="1"/>
        <end position="23"/>
    </location>
</feature>
<feature type="active site" description="Proton acceptor" evidence="4 5">
    <location>
        <position position="163"/>
    </location>
</feature>
<feature type="binding site" evidence="4">
    <location>
        <begin position="41"/>
        <end position="49"/>
    </location>
    <ligand>
        <name>ATP</name>
        <dbReference type="ChEBI" id="CHEBI:30616"/>
    </ligand>
</feature>
<feature type="binding site" evidence="4">
    <location>
        <position position="62"/>
    </location>
    <ligand>
        <name>ATP</name>
        <dbReference type="ChEBI" id="CHEBI:30616"/>
    </ligand>
</feature>
<keyword id="KW-0067">ATP-binding</keyword>
<keyword id="KW-0378">Hydrolase</keyword>
<keyword id="KW-0418">Kinase</keyword>
<keyword id="KW-0547">Nucleotide-binding</keyword>
<keyword id="KW-0539">Nucleus</keyword>
<keyword id="KW-0597">Phosphoprotein</keyword>
<keyword id="KW-1185">Reference proteome</keyword>
<keyword id="KW-0723">Serine/threonine-protein kinase</keyword>
<keyword id="KW-0808">Transferase</keyword>
<keyword id="KW-0819">tRNA processing</keyword>